<protein>
    <recommendedName>
        <fullName evidence="1">UPF0102 protein YraN</fullName>
    </recommendedName>
</protein>
<reference key="1">
    <citation type="journal article" date="2001" name="Nature">
        <title>Genome sequence of enterohaemorrhagic Escherichia coli O157:H7.</title>
        <authorList>
            <person name="Perna N.T."/>
            <person name="Plunkett G. III"/>
            <person name="Burland V."/>
            <person name="Mau B."/>
            <person name="Glasner J.D."/>
            <person name="Rose D.J."/>
            <person name="Mayhew G.F."/>
            <person name="Evans P.S."/>
            <person name="Gregor J."/>
            <person name="Kirkpatrick H.A."/>
            <person name="Posfai G."/>
            <person name="Hackett J."/>
            <person name="Klink S."/>
            <person name="Boutin A."/>
            <person name="Shao Y."/>
            <person name="Miller L."/>
            <person name="Grotbeck E.J."/>
            <person name="Davis N.W."/>
            <person name="Lim A."/>
            <person name="Dimalanta E.T."/>
            <person name="Potamousis K."/>
            <person name="Apodaca J."/>
            <person name="Anantharaman T.S."/>
            <person name="Lin J."/>
            <person name="Yen G."/>
            <person name="Schwartz D.C."/>
            <person name="Welch R.A."/>
            <person name="Blattner F.R."/>
        </authorList>
    </citation>
    <scope>NUCLEOTIDE SEQUENCE [LARGE SCALE GENOMIC DNA]</scope>
    <source>
        <strain>O157:H7 / EDL933 / ATCC 700927 / EHEC</strain>
    </source>
</reference>
<reference key="2">
    <citation type="journal article" date="2001" name="DNA Res.">
        <title>Complete genome sequence of enterohemorrhagic Escherichia coli O157:H7 and genomic comparison with a laboratory strain K-12.</title>
        <authorList>
            <person name="Hayashi T."/>
            <person name="Makino K."/>
            <person name="Ohnishi M."/>
            <person name="Kurokawa K."/>
            <person name="Ishii K."/>
            <person name="Yokoyama K."/>
            <person name="Han C.-G."/>
            <person name="Ohtsubo E."/>
            <person name="Nakayama K."/>
            <person name="Murata T."/>
            <person name="Tanaka M."/>
            <person name="Tobe T."/>
            <person name="Iida T."/>
            <person name="Takami H."/>
            <person name="Honda T."/>
            <person name="Sasakawa C."/>
            <person name="Ogasawara N."/>
            <person name="Yasunaga T."/>
            <person name="Kuhara S."/>
            <person name="Shiba T."/>
            <person name="Hattori M."/>
            <person name="Shinagawa H."/>
        </authorList>
    </citation>
    <scope>NUCLEOTIDE SEQUENCE [LARGE SCALE GENOMIC DNA]</scope>
    <source>
        <strain>O157:H7 / Sakai / RIMD 0509952 / EHEC</strain>
    </source>
</reference>
<proteinExistence type="inferred from homology"/>
<feature type="chain" id="PRO_0000167351" description="UPF0102 protein YraN">
    <location>
        <begin position="1"/>
        <end position="131"/>
    </location>
</feature>
<feature type="region of interest" description="Disordered" evidence="2">
    <location>
        <begin position="1"/>
        <end position="20"/>
    </location>
</feature>
<feature type="compositionally biased region" description="Polar residues" evidence="2">
    <location>
        <begin position="1"/>
        <end position="19"/>
    </location>
</feature>
<sequence length="131" mass="14828">MATVPTRSGSPRQLTTKQTGDAWEVQARRWLEGKGLRFVAANVNERGGEIDLIMREGRTTVFVEVRYRRSALYGGAAASVTRSKQHKLLQTARLWLARHNGSFDTVDCRFDVVAFTGNEVEWIKDTFNDHS</sequence>
<gene>
    <name evidence="1" type="primary">yraN</name>
    <name type="ordered locus">Z4507</name>
    <name type="ordered locus">ECs4029</name>
</gene>
<evidence type="ECO:0000255" key="1">
    <source>
        <dbReference type="HAMAP-Rule" id="MF_00048"/>
    </source>
</evidence>
<evidence type="ECO:0000256" key="2">
    <source>
        <dbReference type="SAM" id="MobiDB-lite"/>
    </source>
</evidence>
<keyword id="KW-1185">Reference proteome</keyword>
<name>YRAN_ECO57</name>
<dbReference type="EMBL" id="AE005174">
    <property type="protein sequence ID" value="AAG58284.1"/>
    <property type="molecule type" value="Genomic_DNA"/>
</dbReference>
<dbReference type="EMBL" id="BA000007">
    <property type="protein sequence ID" value="BAB37452.1"/>
    <property type="molecule type" value="Genomic_DNA"/>
</dbReference>
<dbReference type="PIR" id="E91132">
    <property type="entry name" value="E91132"/>
</dbReference>
<dbReference type="PIR" id="H85977">
    <property type="entry name" value="H85977"/>
</dbReference>
<dbReference type="RefSeq" id="NP_312056.1">
    <property type="nucleotide sequence ID" value="NC_002695.1"/>
</dbReference>
<dbReference type="RefSeq" id="WP_000246856.1">
    <property type="nucleotide sequence ID" value="NZ_VOAI01000014.1"/>
</dbReference>
<dbReference type="SMR" id="Q8XAA3"/>
<dbReference type="STRING" id="155864.Z4507"/>
<dbReference type="GeneID" id="916133"/>
<dbReference type="KEGG" id="ece:Z4507"/>
<dbReference type="KEGG" id="ecs:ECs_4029"/>
<dbReference type="PATRIC" id="fig|386585.9.peg.4208"/>
<dbReference type="eggNOG" id="COG0792">
    <property type="taxonomic scope" value="Bacteria"/>
</dbReference>
<dbReference type="HOGENOM" id="CLU_115353_1_0_6"/>
<dbReference type="OMA" id="TVLERNW"/>
<dbReference type="Proteomes" id="UP000000558">
    <property type="component" value="Chromosome"/>
</dbReference>
<dbReference type="Proteomes" id="UP000002519">
    <property type="component" value="Chromosome"/>
</dbReference>
<dbReference type="GO" id="GO:0003676">
    <property type="term" value="F:nucleic acid binding"/>
    <property type="evidence" value="ECO:0007669"/>
    <property type="project" value="InterPro"/>
</dbReference>
<dbReference type="CDD" id="cd20736">
    <property type="entry name" value="PoNe_Nuclease"/>
    <property type="match status" value="1"/>
</dbReference>
<dbReference type="Gene3D" id="3.40.1350.10">
    <property type="match status" value="1"/>
</dbReference>
<dbReference type="HAMAP" id="MF_00048">
    <property type="entry name" value="UPF0102"/>
    <property type="match status" value="1"/>
</dbReference>
<dbReference type="InterPro" id="IPR011335">
    <property type="entry name" value="Restrct_endonuc-II-like"/>
</dbReference>
<dbReference type="InterPro" id="IPR011856">
    <property type="entry name" value="tRNA_endonuc-like_dom_sf"/>
</dbReference>
<dbReference type="InterPro" id="IPR003509">
    <property type="entry name" value="UPF0102_YraN-like"/>
</dbReference>
<dbReference type="NCBIfam" id="NF009150">
    <property type="entry name" value="PRK12497.1-3"/>
    <property type="match status" value="1"/>
</dbReference>
<dbReference type="NCBIfam" id="TIGR00252">
    <property type="entry name" value="YraN family protein"/>
    <property type="match status" value="1"/>
</dbReference>
<dbReference type="PANTHER" id="PTHR34039">
    <property type="entry name" value="UPF0102 PROTEIN YRAN"/>
    <property type="match status" value="1"/>
</dbReference>
<dbReference type="PANTHER" id="PTHR34039:SF1">
    <property type="entry name" value="UPF0102 PROTEIN YRAN"/>
    <property type="match status" value="1"/>
</dbReference>
<dbReference type="Pfam" id="PF02021">
    <property type="entry name" value="UPF0102"/>
    <property type="match status" value="1"/>
</dbReference>
<dbReference type="SUPFAM" id="SSF52980">
    <property type="entry name" value="Restriction endonuclease-like"/>
    <property type="match status" value="1"/>
</dbReference>
<comment type="similarity">
    <text evidence="1">Belongs to the UPF0102 family.</text>
</comment>
<accession>Q8XAA3</accession>
<organism>
    <name type="scientific">Escherichia coli O157:H7</name>
    <dbReference type="NCBI Taxonomy" id="83334"/>
    <lineage>
        <taxon>Bacteria</taxon>
        <taxon>Pseudomonadati</taxon>
        <taxon>Pseudomonadota</taxon>
        <taxon>Gammaproteobacteria</taxon>
        <taxon>Enterobacterales</taxon>
        <taxon>Enterobacteriaceae</taxon>
        <taxon>Escherichia</taxon>
    </lineage>
</organism>